<comment type="catalytic activity">
    <reaction>
        <text>ATP + H2O + 4 H(+)(in) = ADP + phosphate + 5 H(+)(out)</text>
        <dbReference type="Rhea" id="RHEA:57720"/>
        <dbReference type="ChEBI" id="CHEBI:15377"/>
        <dbReference type="ChEBI" id="CHEBI:15378"/>
        <dbReference type="ChEBI" id="CHEBI:30616"/>
        <dbReference type="ChEBI" id="CHEBI:43474"/>
        <dbReference type="ChEBI" id="CHEBI:456216"/>
        <dbReference type="EC" id="7.1.2.2"/>
    </reaction>
</comment>
<comment type="subunit">
    <text>Sul-ATPase is composed of six (or maybe five) subunits: alpha, beta, delta, gamma, C (proteolipid), and possibly epsilon.</text>
</comment>
<comment type="similarity">
    <text evidence="1">To E.hirae NtpH.</text>
</comment>
<gene>
    <name type="primary">atpE</name>
    <name type="ordered locus">Saci_1551</name>
</gene>
<evidence type="ECO:0000305" key="1"/>
<organism>
    <name type="scientific">Sulfolobus acidocaldarius (strain ATCC 33909 / DSM 639 / JCM 8929 / NBRC 15157 / NCIMB 11770)</name>
    <dbReference type="NCBI Taxonomy" id="330779"/>
    <lineage>
        <taxon>Archaea</taxon>
        <taxon>Thermoproteota</taxon>
        <taxon>Thermoprotei</taxon>
        <taxon>Sulfolobales</taxon>
        <taxon>Sulfolobaceae</taxon>
        <taxon>Sulfolobus</taxon>
    </lineage>
</organism>
<reference key="1">
    <citation type="journal article" date="2005" name="J. Bacteriol.">
        <title>The genome of Sulfolobus acidocaldarius, a model organism of the Crenarchaeota.</title>
        <authorList>
            <person name="Chen L."/>
            <person name="Bruegger K."/>
            <person name="Skovgaard M."/>
            <person name="Redder P."/>
            <person name="She Q."/>
            <person name="Torarinsson E."/>
            <person name="Greve B."/>
            <person name="Awayez M."/>
            <person name="Zibat A."/>
            <person name="Klenk H.-P."/>
            <person name="Garrett R.A."/>
        </authorList>
    </citation>
    <scope>NUCLEOTIDE SEQUENCE [LARGE SCALE GENOMIC DNA]</scope>
    <source>
        <strain>ATCC 33909 / DSM 639 / JCM 8929 / NBRC 15157 / NCIMB 11770</strain>
    </source>
</reference>
<keyword id="KW-0067">ATP-binding</keyword>
<keyword id="KW-0375">Hydrogen ion transport</keyword>
<keyword id="KW-0406">Ion transport</keyword>
<keyword id="KW-0547">Nucleotide-binding</keyword>
<keyword id="KW-1185">Reference proteome</keyword>
<keyword id="KW-1278">Translocase</keyword>
<keyword id="KW-0813">Transport</keyword>
<proteinExistence type="predicted"/>
<protein>
    <recommendedName>
        <fullName>Membrane-associated ATPase epsilon chain</fullName>
        <ecNumber>7.1.2.2</ecNumber>
    </recommendedName>
    <alternativeName>
        <fullName>Sul-ATPase epsilon chain</fullName>
    </alternativeName>
</protein>
<dbReference type="EC" id="7.1.2.2"/>
<dbReference type="EMBL" id="CP000077">
    <property type="protein sequence ID" value="AAY80864.1"/>
    <property type="molecule type" value="Genomic_DNA"/>
</dbReference>
<dbReference type="SMR" id="Q4J8L6"/>
<dbReference type="STRING" id="330779.Saci_1551"/>
<dbReference type="KEGG" id="sai:Saci_1551"/>
<dbReference type="PATRIC" id="fig|330779.12.peg.1491"/>
<dbReference type="eggNOG" id="arCOG07285">
    <property type="taxonomic scope" value="Archaea"/>
</dbReference>
<dbReference type="HOGENOM" id="CLU_198000_0_0_2"/>
<dbReference type="Proteomes" id="UP000001018">
    <property type="component" value="Chromosome"/>
</dbReference>
<dbReference type="GO" id="GO:0033178">
    <property type="term" value="C:proton-transporting two-sector ATPase complex, catalytic domain"/>
    <property type="evidence" value="ECO:0007669"/>
    <property type="project" value="InterPro"/>
</dbReference>
<dbReference type="GO" id="GO:0005524">
    <property type="term" value="F:ATP binding"/>
    <property type="evidence" value="ECO:0007669"/>
    <property type="project" value="UniProtKB-KW"/>
</dbReference>
<dbReference type="GO" id="GO:0042626">
    <property type="term" value="F:ATPase-coupled transmembrane transporter activity"/>
    <property type="evidence" value="ECO:0007669"/>
    <property type="project" value="InterPro"/>
</dbReference>
<dbReference type="GO" id="GO:0015986">
    <property type="term" value="P:proton motive force-driven ATP synthesis"/>
    <property type="evidence" value="ECO:0007669"/>
    <property type="project" value="InterPro"/>
</dbReference>
<dbReference type="GO" id="GO:1902600">
    <property type="term" value="P:proton transmembrane transport"/>
    <property type="evidence" value="ECO:0007669"/>
    <property type="project" value="UniProtKB-KW"/>
</dbReference>
<dbReference type="InterPro" id="IPR012508">
    <property type="entry name" value="ATPase_A1-cplx_e-su"/>
</dbReference>
<dbReference type="Pfam" id="PF08112">
    <property type="entry name" value="ATP-synt_E_2"/>
    <property type="match status" value="1"/>
</dbReference>
<accession>Q4J8L6</accession>
<name>MTPE_SULAC</name>
<sequence length="77" mass="9194">MIEQGRSSQDLKWLENYFKEGGNKMAETYINELKSKLDARKKEILSQLNEEYNKILKSRFEDLESVKRNILKEVQNI</sequence>
<feature type="chain" id="PRO_0000071729" description="Membrane-associated ATPase epsilon chain">
    <location>
        <begin position="1"/>
        <end position="77"/>
    </location>
</feature>